<keyword id="KW-0117">Actin capping</keyword>
<keyword id="KW-0009">Actin-binding</keyword>
<keyword id="KW-0106">Calcium</keyword>
<keyword id="KW-0677">Repeat</keyword>
<dbReference type="EMBL" id="AF134399">
    <property type="protein sequence ID" value="AAK00052.1"/>
    <property type="molecule type" value="Genomic_DNA"/>
</dbReference>
<dbReference type="EMBL" id="AF134398">
    <property type="protein sequence ID" value="AAK00053.1"/>
    <property type="molecule type" value="mRNA"/>
</dbReference>
<dbReference type="EMBL" id="AF329317">
    <property type="protein sequence ID" value="AAK15753.1"/>
    <property type="molecule type" value="mRNA"/>
</dbReference>
<dbReference type="SMR" id="Q24800"/>
<dbReference type="OrthoDB" id="6375767at2759"/>
<dbReference type="Proteomes" id="UP000492820">
    <property type="component" value="Unplaced"/>
</dbReference>
<dbReference type="GO" id="GO:0015629">
    <property type="term" value="C:actin cytoskeleton"/>
    <property type="evidence" value="ECO:0007669"/>
    <property type="project" value="TreeGrafter"/>
</dbReference>
<dbReference type="GO" id="GO:0005737">
    <property type="term" value="C:cytoplasm"/>
    <property type="evidence" value="ECO:0007669"/>
    <property type="project" value="TreeGrafter"/>
</dbReference>
<dbReference type="GO" id="GO:0051015">
    <property type="term" value="F:actin filament binding"/>
    <property type="evidence" value="ECO:0007669"/>
    <property type="project" value="InterPro"/>
</dbReference>
<dbReference type="GO" id="GO:0051693">
    <property type="term" value="P:actin filament capping"/>
    <property type="evidence" value="ECO:0007669"/>
    <property type="project" value="UniProtKB-KW"/>
</dbReference>
<dbReference type="GO" id="GO:0008154">
    <property type="term" value="P:actin polymerization or depolymerization"/>
    <property type="evidence" value="ECO:0007669"/>
    <property type="project" value="TreeGrafter"/>
</dbReference>
<dbReference type="CDD" id="cd11290">
    <property type="entry name" value="gelsolin_S1_like"/>
    <property type="match status" value="1"/>
</dbReference>
<dbReference type="CDD" id="cd11289">
    <property type="entry name" value="gelsolin_S2_like"/>
    <property type="match status" value="1"/>
</dbReference>
<dbReference type="CDD" id="cd11292">
    <property type="entry name" value="gelsolin_S3_like"/>
    <property type="match status" value="1"/>
</dbReference>
<dbReference type="Gene3D" id="3.40.20.10">
    <property type="entry name" value="Severin"/>
    <property type="match status" value="3"/>
</dbReference>
<dbReference type="InterPro" id="IPR029006">
    <property type="entry name" value="ADF-H/Gelsolin-like_dom_sf"/>
</dbReference>
<dbReference type="InterPro" id="IPR007123">
    <property type="entry name" value="Gelsolin-like_dom"/>
</dbReference>
<dbReference type="InterPro" id="IPR007122">
    <property type="entry name" value="Villin/Gelsolin"/>
</dbReference>
<dbReference type="PANTHER" id="PTHR11977:SF130">
    <property type="entry name" value="SEVERIN"/>
    <property type="match status" value="1"/>
</dbReference>
<dbReference type="PANTHER" id="PTHR11977">
    <property type="entry name" value="VILLIN"/>
    <property type="match status" value="1"/>
</dbReference>
<dbReference type="Pfam" id="PF00626">
    <property type="entry name" value="Gelsolin"/>
    <property type="match status" value="3"/>
</dbReference>
<dbReference type="PRINTS" id="PR00597">
    <property type="entry name" value="GELSOLIN"/>
</dbReference>
<dbReference type="SMART" id="SM00262">
    <property type="entry name" value="GEL"/>
    <property type="match status" value="3"/>
</dbReference>
<dbReference type="SUPFAM" id="SSF55753">
    <property type="entry name" value="Actin depolymerizing proteins"/>
    <property type="match status" value="3"/>
</dbReference>
<comment type="function">
    <text>Severin blocks the ends of F-actin and causes the fragmentation and depolymerization of actin filaments. This severin binds stably with actin both in a Ca(2+) dependent and a Ca(2+) independent manner.</text>
</comment>
<comment type="miscellaneous">
    <text>Severin changes its conformation upon binding of Ca(2+) and then interacts with F-actin.</text>
</comment>
<comment type="similarity">
    <text evidence="1">Belongs to the villin/gelsolin family.</text>
</comment>
<reference key="1">
    <citation type="journal article" date="2001" name="Exp. Parasitol.">
        <title>Echinococcus granulosus: cloning and functional in vitro characterization of an actin filament fragmenting protein.</title>
        <authorList>
            <person name="Cortez-Herrera E."/>
            <person name="Yamamoto R.R."/>
            <person name="Rodrigues J.J.S."/>
            <person name="Farias S.E."/>
            <person name="Ferreira H.B."/>
            <person name="Zaha A."/>
        </authorList>
    </citation>
    <scope>NUCLEOTIDE SEQUENCE [GENOMIC DNA / MRNA]</scope>
</reference>
<reference key="2">
    <citation type="submission" date="2000-12" db="EMBL/GenBank/DDBJ databases">
        <title>Cloning of an Echinococcus granulosus protein sharing three functional domains with gelsolin.</title>
        <authorList>
            <person name="Zhang L.H."/>
            <person name="McManus D.P."/>
        </authorList>
    </citation>
    <scope>NUCLEOTIDE SEQUENCE [MRNA]</scope>
</reference>
<feature type="chain" id="PRO_0000218748" description="Severin">
    <location>
        <begin position="1"/>
        <end position="374"/>
    </location>
</feature>
<feature type="repeat" description="Gelsolin-like 1">
    <location>
        <begin position="58"/>
        <end position="109"/>
    </location>
</feature>
<feature type="repeat" description="Gelsolin-like 2">
    <location>
        <begin position="180"/>
        <end position="220"/>
    </location>
</feature>
<feature type="repeat" description="Gelsolin-like 3">
    <location>
        <begin position="278"/>
        <end position="369"/>
    </location>
</feature>
<feature type="sequence conflict" description="In Ref. 2; AAK15753." evidence="1" ref="2">
    <original>S</original>
    <variation>P</variation>
    <location>
        <position position="76"/>
    </location>
</feature>
<feature type="sequence conflict" description="In Ref. 1; AAK00053 and 2." evidence="1" ref="1 2">
    <location>
        <begin position="152"/>
        <end position="155"/>
    </location>
</feature>
<feature type="sequence conflict" description="In Ref. 2; AAK15753." evidence="1" ref="2">
    <location>
        <begin position="255"/>
        <end position="258"/>
    </location>
</feature>
<sequence>MAGLVKAKDYDWKDSNMELFGSSKDRQVKKESAMTEKCWEPVGRATSPFLMVWRVNQFTLEPVPSDEIGNFYNGDSYVICKATRSPGGDKLLYNVHFWIGKHSTADEYGTAAYKTVELDTFLDDAAVQHREVEGYESQLFKSYFDKLVILKVILKGGYASGFRHVKPDEYRPRLLRFCKEGKTTYMRQVAFSKQSVHSGDVFILDLGSRAYQFNGSKCSAFEKSSAAAFLQDLESKRNGRCNTSVLDEADTPQDVGVLHEFWTALPDVPVKELEPPKEVIKSLYKLSDSSGKLELTIVSEGSASKHDIKPDDVYIILTKEGLFVYIGKDCSVLEKRNALSNAHKFLQTCPNPFLPITVVTDEQAESFLKGIWDE</sequence>
<gene>
    <name type="primary">AG8</name>
</gene>
<protein>
    <recommendedName>
        <fullName>Severin</fullName>
    </recommendedName>
</protein>
<proteinExistence type="evidence at transcript level"/>
<accession>Q24800</accession>
<accession>Q9BJW1</accession>
<accession>Q9BKM7</accession>
<evidence type="ECO:0000305" key="1"/>
<name>SEVE_ECHGR</name>
<organism>
    <name type="scientific">Echinococcus granulosus</name>
    <name type="common">Hydatid tapeworm</name>
    <dbReference type="NCBI Taxonomy" id="6210"/>
    <lineage>
        <taxon>Eukaryota</taxon>
        <taxon>Metazoa</taxon>
        <taxon>Spiralia</taxon>
        <taxon>Lophotrochozoa</taxon>
        <taxon>Platyhelminthes</taxon>
        <taxon>Cestoda</taxon>
        <taxon>Eucestoda</taxon>
        <taxon>Cyclophyllidea</taxon>
        <taxon>Taeniidae</taxon>
        <taxon>Echinococcus</taxon>
        <taxon>Echinococcus granulosus group</taxon>
    </lineage>
</organism>